<reference key="1">
    <citation type="submission" date="2006-08" db="EMBL/GenBank/DDBJ databases">
        <title>Complete sequence of Shewanella frigidimarina NCIMB 400.</title>
        <authorList>
            <consortium name="US DOE Joint Genome Institute"/>
            <person name="Copeland A."/>
            <person name="Lucas S."/>
            <person name="Lapidus A."/>
            <person name="Barry K."/>
            <person name="Detter J.C."/>
            <person name="Glavina del Rio T."/>
            <person name="Hammon N."/>
            <person name="Israni S."/>
            <person name="Dalin E."/>
            <person name="Tice H."/>
            <person name="Pitluck S."/>
            <person name="Fredrickson J.K."/>
            <person name="Kolker E."/>
            <person name="McCuel L.A."/>
            <person name="DiChristina T."/>
            <person name="Nealson K.H."/>
            <person name="Newman D."/>
            <person name="Tiedje J.M."/>
            <person name="Zhou J."/>
            <person name="Romine M.F."/>
            <person name="Culley D.E."/>
            <person name="Serres M."/>
            <person name="Chertkov O."/>
            <person name="Brettin T."/>
            <person name="Bruce D."/>
            <person name="Han C."/>
            <person name="Tapia R."/>
            <person name="Gilna P."/>
            <person name="Schmutz J."/>
            <person name="Larimer F."/>
            <person name="Land M."/>
            <person name="Hauser L."/>
            <person name="Kyrpides N."/>
            <person name="Mikhailova N."/>
            <person name="Richardson P."/>
        </authorList>
    </citation>
    <scope>NUCLEOTIDE SEQUENCE [LARGE SCALE GENOMIC DNA]</scope>
    <source>
        <strain>NCIMB 400</strain>
    </source>
</reference>
<sequence length="71" mass="8345">MPIIKVRENEPFDVALRRFKRSCEKAGILADVRAREFYEKPTTARKRAKAAAVKRLAKKLSRENARRVRLY</sequence>
<feature type="chain" id="PRO_0000266760" description="Small ribosomal subunit protein bS21">
    <location>
        <begin position="1"/>
        <end position="71"/>
    </location>
</feature>
<accession>Q07YT2</accession>
<proteinExistence type="inferred from homology"/>
<organism>
    <name type="scientific">Shewanella frigidimarina (strain NCIMB 400)</name>
    <dbReference type="NCBI Taxonomy" id="318167"/>
    <lineage>
        <taxon>Bacteria</taxon>
        <taxon>Pseudomonadati</taxon>
        <taxon>Pseudomonadota</taxon>
        <taxon>Gammaproteobacteria</taxon>
        <taxon>Alteromonadales</taxon>
        <taxon>Shewanellaceae</taxon>
        <taxon>Shewanella</taxon>
    </lineage>
</organism>
<dbReference type="EMBL" id="CP000447">
    <property type="protein sequence ID" value="ABI72832.1"/>
    <property type="molecule type" value="Genomic_DNA"/>
</dbReference>
<dbReference type="RefSeq" id="WP_006080725.1">
    <property type="nucleotide sequence ID" value="NC_008345.1"/>
</dbReference>
<dbReference type="SMR" id="Q07YT2"/>
<dbReference type="STRING" id="318167.Sfri_2993"/>
<dbReference type="GeneID" id="94729004"/>
<dbReference type="KEGG" id="sfr:Sfri_2993"/>
<dbReference type="eggNOG" id="COG0828">
    <property type="taxonomic scope" value="Bacteria"/>
</dbReference>
<dbReference type="HOGENOM" id="CLU_159258_1_0_6"/>
<dbReference type="OrthoDB" id="9799244at2"/>
<dbReference type="Proteomes" id="UP000000684">
    <property type="component" value="Chromosome"/>
</dbReference>
<dbReference type="GO" id="GO:1990904">
    <property type="term" value="C:ribonucleoprotein complex"/>
    <property type="evidence" value="ECO:0007669"/>
    <property type="project" value="UniProtKB-KW"/>
</dbReference>
<dbReference type="GO" id="GO:0005840">
    <property type="term" value="C:ribosome"/>
    <property type="evidence" value="ECO:0007669"/>
    <property type="project" value="UniProtKB-KW"/>
</dbReference>
<dbReference type="GO" id="GO:0003735">
    <property type="term" value="F:structural constituent of ribosome"/>
    <property type="evidence" value="ECO:0007669"/>
    <property type="project" value="InterPro"/>
</dbReference>
<dbReference type="GO" id="GO:0006412">
    <property type="term" value="P:translation"/>
    <property type="evidence" value="ECO:0007669"/>
    <property type="project" value="UniProtKB-UniRule"/>
</dbReference>
<dbReference type="Gene3D" id="1.20.5.1150">
    <property type="entry name" value="Ribosomal protein S8"/>
    <property type="match status" value="1"/>
</dbReference>
<dbReference type="HAMAP" id="MF_00358">
    <property type="entry name" value="Ribosomal_bS21"/>
    <property type="match status" value="1"/>
</dbReference>
<dbReference type="InterPro" id="IPR001911">
    <property type="entry name" value="Ribosomal_bS21"/>
</dbReference>
<dbReference type="InterPro" id="IPR018278">
    <property type="entry name" value="Ribosomal_bS21_CS"/>
</dbReference>
<dbReference type="InterPro" id="IPR038380">
    <property type="entry name" value="Ribosomal_bS21_sf"/>
</dbReference>
<dbReference type="NCBIfam" id="TIGR00030">
    <property type="entry name" value="S21p"/>
    <property type="match status" value="1"/>
</dbReference>
<dbReference type="PANTHER" id="PTHR21109">
    <property type="entry name" value="MITOCHONDRIAL 28S RIBOSOMAL PROTEIN S21"/>
    <property type="match status" value="1"/>
</dbReference>
<dbReference type="PANTHER" id="PTHR21109:SF22">
    <property type="entry name" value="SMALL RIBOSOMAL SUBUNIT PROTEIN BS21"/>
    <property type="match status" value="1"/>
</dbReference>
<dbReference type="Pfam" id="PF01165">
    <property type="entry name" value="Ribosomal_S21"/>
    <property type="match status" value="1"/>
</dbReference>
<dbReference type="PRINTS" id="PR00976">
    <property type="entry name" value="RIBOSOMALS21"/>
</dbReference>
<dbReference type="PROSITE" id="PS01181">
    <property type="entry name" value="RIBOSOMAL_S21"/>
    <property type="match status" value="1"/>
</dbReference>
<name>RS21_SHEFN</name>
<protein>
    <recommendedName>
        <fullName evidence="1">Small ribosomal subunit protein bS21</fullName>
    </recommendedName>
    <alternativeName>
        <fullName evidence="2">30S ribosomal protein S21</fullName>
    </alternativeName>
</protein>
<keyword id="KW-1185">Reference proteome</keyword>
<keyword id="KW-0687">Ribonucleoprotein</keyword>
<keyword id="KW-0689">Ribosomal protein</keyword>
<gene>
    <name evidence="1" type="primary">rpsU</name>
    <name type="ordered locus">Sfri_2993</name>
</gene>
<comment type="similarity">
    <text evidence="1">Belongs to the bacterial ribosomal protein bS21 family.</text>
</comment>
<evidence type="ECO:0000255" key="1">
    <source>
        <dbReference type="HAMAP-Rule" id="MF_00358"/>
    </source>
</evidence>
<evidence type="ECO:0000305" key="2"/>